<evidence type="ECO:0000255" key="1"/>
<evidence type="ECO:0000256" key="2">
    <source>
        <dbReference type="SAM" id="MobiDB-lite"/>
    </source>
</evidence>
<evidence type="ECO:0000269" key="3">
    <source>
    </source>
</evidence>
<evidence type="ECO:0000269" key="4">
    <source>
    </source>
</evidence>
<evidence type="ECO:0000303" key="5">
    <source>
    </source>
</evidence>
<evidence type="ECO:0000303" key="6">
    <source>
    </source>
</evidence>
<evidence type="ECO:0000305" key="7"/>
<evidence type="ECO:0000312" key="8">
    <source>
        <dbReference type="Araport" id="AT3G28430"/>
    </source>
</evidence>
<evidence type="ECO:0000312" key="9">
    <source>
        <dbReference type="EMBL" id="BAB02860.1"/>
    </source>
</evidence>
<dbReference type="EMBL" id="AB026644">
    <property type="protein sequence ID" value="BAB02860.1"/>
    <property type="status" value="ALT_SEQ"/>
    <property type="molecule type" value="Genomic_DNA"/>
</dbReference>
<dbReference type="EMBL" id="CP002686">
    <property type="protein sequence ID" value="AEE77444.1"/>
    <property type="molecule type" value="Genomic_DNA"/>
</dbReference>
<dbReference type="EMBL" id="AY062117">
    <property type="protein sequence ID" value="AAL32989.1"/>
    <property type="molecule type" value="mRNA"/>
</dbReference>
<dbReference type="EMBL" id="AK319089">
    <property type="protein sequence ID" value="BAH57204.1"/>
    <property type="molecule type" value="mRNA"/>
</dbReference>
<dbReference type="RefSeq" id="NP_566837.1">
    <property type="nucleotide sequence ID" value="NM_113763.3"/>
</dbReference>
<dbReference type="SMR" id="Q8W4P9"/>
<dbReference type="FunCoup" id="Q8W4P9">
    <property type="interactions" value="2132"/>
</dbReference>
<dbReference type="IntAct" id="Q8W4P9">
    <property type="interactions" value="1"/>
</dbReference>
<dbReference type="STRING" id="3702.Q8W4P9"/>
<dbReference type="iPTMnet" id="Q8W4P9"/>
<dbReference type="PaxDb" id="3702-AT3G28430.1"/>
<dbReference type="ProteomicsDB" id="232357"/>
<dbReference type="EnsemblPlants" id="AT3G28430.1">
    <property type="protein sequence ID" value="AT3G28430.1"/>
    <property type="gene ID" value="AT3G28430"/>
</dbReference>
<dbReference type="GeneID" id="822473"/>
<dbReference type="Gramene" id="AT3G28430.1">
    <property type="protein sequence ID" value="AT3G28430.1"/>
    <property type="gene ID" value="AT3G28430"/>
</dbReference>
<dbReference type="KEGG" id="ath:AT3G28430"/>
<dbReference type="Araport" id="AT3G28430"/>
<dbReference type="TAIR" id="AT3G28430">
    <property type="gene designation" value="TT9"/>
</dbReference>
<dbReference type="eggNOG" id="KOG2219">
    <property type="taxonomic scope" value="Eukaryota"/>
</dbReference>
<dbReference type="HOGENOM" id="CLU_017600_0_0_1"/>
<dbReference type="InParanoid" id="Q8W4P9"/>
<dbReference type="OMA" id="DEKHAKW"/>
<dbReference type="PhylomeDB" id="Q8W4P9"/>
<dbReference type="PRO" id="PR:Q8W4P9"/>
<dbReference type="Proteomes" id="UP000006548">
    <property type="component" value="Chromosome 3"/>
</dbReference>
<dbReference type="ExpressionAtlas" id="Q8W4P9">
    <property type="expression patterns" value="baseline and differential"/>
</dbReference>
<dbReference type="GO" id="GO:0019898">
    <property type="term" value="C:extrinsic component of membrane"/>
    <property type="evidence" value="ECO:0000314"/>
    <property type="project" value="TAIR"/>
</dbReference>
<dbReference type="GO" id="GO:0005794">
    <property type="term" value="C:Golgi apparatus"/>
    <property type="evidence" value="ECO:0000314"/>
    <property type="project" value="TAIR"/>
</dbReference>
<dbReference type="GO" id="GO:0000139">
    <property type="term" value="C:Golgi membrane"/>
    <property type="evidence" value="ECO:0007669"/>
    <property type="project" value="UniProtKB-SubCell"/>
</dbReference>
<dbReference type="GO" id="GO:0009718">
    <property type="term" value="P:anthocyanin-containing compound biosynthetic process"/>
    <property type="evidence" value="ECO:0000314"/>
    <property type="project" value="TAIR"/>
</dbReference>
<dbReference type="GO" id="GO:0001708">
    <property type="term" value="P:cell fate specification"/>
    <property type="evidence" value="ECO:0000315"/>
    <property type="project" value="TAIR"/>
</dbReference>
<dbReference type="GO" id="GO:1903415">
    <property type="term" value="P:flavonoid transport from endoplasmic reticulum to plant-type vacuole"/>
    <property type="evidence" value="ECO:0000315"/>
    <property type="project" value="TAIR"/>
</dbReference>
<dbReference type="GO" id="GO:0044090">
    <property type="term" value="P:positive regulation of vacuole organization"/>
    <property type="evidence" value="ECO:0000315"/>
    <property type="project" value="TAIR"/>
</dbReference>
<dbReference type="GO" id="GO:0016192">
    <property type="term" value="P:vesicle-mediated transport"/>
    <property type="evidence" value="ECO:0000315"/>
    <property type="project" value="TAIR"/>
</dbReference>
<dbReference type="InterPro" id="IPR016024">
    <property type="entry name" value="ARM-type_fold"/>
</dbReference>
<dbReference type="InterPro" id="IPR039272">
    <property type="entry name" value="CLEC16A/TT9"/>
</dbReference>
<dbReference type="InterPro" id="IPR045820">
    <property type="entry name" value="CLEC16A/TT9_C"/>
</dbReference>
<dbReference type="InterPro" id="IPR019155">
    <property type="entry name" value="CLEC16A/TT9_N"/>
</dbReference>
<dbReference type="PANTHER" id="PTHR21481">
    <property type="entry name" value="PROTEIN CLEC16A"/>
    <property type="match status" value="1"/>
</dbReference>
<dbReference type="PANTHER" id="PTHR21481:SF4">
    <property type="entry name" value="PROTEIN TRANSPARENT TESTA 9"/>
    <property type="match status" value="1"/>
</dbReference>
<dbReference type="Pfam" id="PF19439">
    <property type="entry name" value="CLEC16A_C"/>
    <property type="match status" value="1"/>
</dbReference>
<dbReference type="Pfam" id="PF09758">
    <property type="entry name" value="FPL"/>
    <property type="match status" value="1"/>
</dbReference>
<dbReference type="SUPFAM" id="SSF48371">
    <property type="entry name" value="ARM repeat"/>
    <property type="match status" value="1"/>
</dbReference>
<sequence length="837" mass="94742">MWLSFLRPRDRFSLAELRYLTDQLRKIQIVNEANKDLVIEALRSIAEILTYGDQHDPLFFEFFMEKQVMGEFVRILRVSKTVTVSVQLLQTMSIMIQNLKSEQAIYYLFSNEYVNYLITYTFDFQHEELLSYYISFLRAVSGKLNKHTISLLLKTENDVVVSFPLYVEGIQFAFHEENMIRTAVRALTLNVYHVGDESVNDYVVSPPHTEYFSKLISFFQKQCMDLSAMVLNTLKSPSPDSGGKLFSAVDGIEDTLYYFSDVISAGIPDIGRLITDHILQHLTLPLLLPSLCSEAVNDISVDPVTSLYLLSCILRIVKIKDLANMTAATLFCPVKAFISSSLVKPNSSLAPEGLTYVNGHPDKGVTEEANQQCSSTAAGMSDDGNSHLCSEDTPKSIFNNSHMTFRETLLQYISEGDDVQAQGSLFVLATLLQTKELEESMLDAFGILPQRKQHKKLLLQSLVGEDTGEEQLFSPRNGSMRDGLSSELDWYLRRLEEQFGVCCSLPGAARCPRVHRHQVVDTLVTLLCRENISAETLWDGGWLLRQLLPYSEAEFNRKHLKMLNVSYEKCKNSLTREIKGIWPDLLIRVLLDEWRKCKRVIEAPSPQKEPKSVLLQLDRSSSNDNSVSESSFTAGERMCEVVKVFVLLHQLQIFSLGRSLPEQPPIYPPADRSETSRATRAGLDVSVPKPGTELKLVDAVPCRIAFERGKERDFSFLALSSGESGWIVLADPDNGIVRVTAPLAGCKPRIDEKHPRWLHLRIRPSTLPLLDPTKRGVYEKLKSKGLVDGRWILAFRDDESCHSAYSMVAGEIDLQCSEVERRLRPLFDLERNQLEDQ</sequence>
<feature type="chain" id="PRO_0000443285" description="Protein TRANSPARENT TESTA 9">
    <location>
        <begin position="1"/>
        <end position="837"/>
    </location>
</feature>
<feature type="domain" description="FPL" evidence="1">
    <location>
        <begin position="42"/>
        <end position="192"/>
    </location>
</feature>
<feature type="region of interest" description="Disordered" evidence="2">
    <location>
        <begin position="366"/>
        <end position="386"/>
    </location>
</feature>
<feature type="compositionally biased region" description="Polar residues" evidence="2">
    <location>
        <begin position="368"/>
        <end position="378"/>
    </location>
</feature>
<feature type="sequence conflict" description="In Ref. 4; BAH57204." evidence="7" ref="4">
    <original>T</original>
    <variation>A</variation>
    <location>
        <position position="773"/>
    </location>
</feature>
<gene>
    <name evidence="6" type="primary">TT9</name>
    <name evidence="5" type="synonym">GFS9</name>
    <name evidence="8" type="ordered locus">At3g28430</name>
    <name evidence="9" type="ORF">MFJ20.13</name>
</gene>
<proteinExistence type="evidence at transcript level"/>
<keyword id="KW-0333">Golgi apparatus</keyword>
<keyword id="KW-0472">Membrane</keyword>
<keyword id="KW-1185">Reference proteome</keyword>
<protein>
    <recommendedName>
        <fullName evidence="6">Protein TRANSPARENT TESTA 9</fullName>
    </recommendedName>
    <alternativeName>
        <fullName evidence="5">Protein GREEN FLUORESCENT SEED 9</fullName>
    </alternativeName>
</protein>
<reference key="1">
    <citation type="journal article" date="2000" name="DNA Res.">
        <title>Structural analysis of Arabidopsis thaliana chromosome 3. I. Sequence features of the regions of 4,504,864 bp covered by sixty P1 and TAC clones.</title>
        <authorList>
            <person name="Sato S."/>
            <person name="Nakamura Y."/>
            <person name="Kaneko T."/>
            <person name="Katoh T."/>
            <person name="Asamizu E."/>
            <person name="Tabata S."/>
        </authorList>
    </citation>
    <scope>NUCLEOTIDE SEQUENCE [LARGE SCALE GENOMIC DNA]</scope>
    <source>
        <strain>cv. Columbia</strain>
    </source>
</reference>
<reference key="2">
    <citation type="journal article" date="2017" name="Plant J.">
        <title>Araport11: a complete reannotation of the Arabidopsis thaliana reference genome.</title>
        <authorList>
            <person name="Cheng C.Y."/>
            <person name="Krishnakumar V."/>
            <person name="Chan A.P."/>
            <person name="Thibaud-Nissen F."/>
            <person name="Schobel S."/>
            <person name="Town C.D."/>
        </authorList>
    </citation>
    <scope>GENOME REANNOTATION</scope>
    <source>
        <strain>cv. Columbia</strain>
    </source>
</reference>
<reference key="3">
    <citation type="journal article" date="2003" name="Science">
        <title>Empirical analysis of transcriptional activity in the Arabidopsis genome.</title>
        <authorList>
            <person name="Yamada K."/>
            <person name="Lim J."/>
            <person name="Dale J.M."/>
            <person name="Chen H."/>
            <person name="Shinn P."/>
            <person name="Palm C.J."/>
            <person name="Southwick A.M."/>
            <person name="Wu H.C."/>
            <person name="Kim C.J."/>
            <person name="Nguyen M."/>
            <person name="Pham P.K."/>
            <person name="Cheuk R.F."/>
            <person name="Karlin-Newmann G."/>
            <person name="Liu S.X."/>
            <person name="Lam B."/>
            <person name="Sakano H."/>
            <person name="Wu T."/>
            <person name="Yu G."/>
            <person name="Miranda M."/>
            <person name="Quach H.L."/>
            <person name="Tripp M."/>
            <person name="Chang C.H."/>
            <person name="Lee J.M."/>
            <person name="Toriumi M.J."/>
            <person name="Chan M.M."/>
            <person name="Tang C.C."/>
            <person name="Onodera C.S."/>
            <person name="Deng J.M."/>
            <person name="Akiyama K."/>
            <person name="Ansari Y."/>
            <person name="Arakawa T."/>
            <person name="Banh J."/>
            <person name="Banno F."/>
            <person name="Bowser L."/>
            <person name="Brooks S.Y."/>
            <person name="Carninci P."/>
            <person name="Chao Q."/>
            <person name="Choy N."/>
            <person name="Enju A."/>
            <person name="Goldsmith A.D."/>
            <person name="Gurjal M."/>
            <person name="Hansen N.F."/>
            <person name="Hayashizaki Y."/>
            <person name="Johnson-Hopson C."/>
            <person name="Hsuan V.W."/>
            <person name="Iida K."/>
            <person name="Karnes M."/>
            <person name="Khan S."/>
            <person name="Koesema E."/>
            <person name="Ishida J."/>
            <person name="Jiang P.X."/>
            <person name="Jones T."/>
            <person name="Kawai J."/>
            <person name="Kamiya A."/>
            <person name="Meyers C."/>
            <person name="Nakajima M."/>
            <person name="Narusaka M."/>
            <person name="Seki M."/>
            <person name="Sakurai T."/>
            <person name="Satou M."/>
            <person name="Tamse R."/>
            <person name="Vaysberg M."/>
            <person name="Wallender E.K."/>
            <person name="Wong C."/>
            <person name="Yamamura Y."/>
            <person name="Yuan S."/>
            <person name="Shinozaki K."/>
            <person name="Davis R.W."/>
            <person name="Theologis A."/>
            <person name="Ecker J.R."/>
        </authorList>
    </citation>
    <scope>NUCLEOTIDE SEQUENCE [LARGE SCALE MRNA]</scope>
    <source>
        <strain>cv. Columbia</strain>
    </source>
</reference>
<reference key="4">
    <citation type="journal article" date="2009" name="DNA Res.">
        <title>Analysis of multiple occurrences of alternative splicing events in Arabidopsis thaliana using novel sequenced full-length cDNAs.</title>
        <authorList>
            <person name="Iida K."/>
            <person name="Fukami-Kobayashi K."/>
            <person name="Toyoda A."/>
            <person name="Sakaki Y."/>
            <person name="Kobayashi M."/>
            <person name="Seki M."/>
            <person name="Shinozaki K."/>
        </authorList>
    </citation>
    <scope>NUCLEOTIDE SEQUENCE [LARGE SCALE MRNA] OF 441-837</scope>
    <source>
        <strain>cv. Columbia</strain>
    </source>
</reference>
<reference key="5">
    <citation type="journal article" date="1995" name="Plant J.">
        <title>Analysis of Arabidopsis mutants deficient in flavonoid biosynthesis.</title>
        <authorList>
            <person name="Shirley B.W."/>
            <person name="Kubasek W.L."/>
            <person name="Storz G."/>
            <person name="Bruggemann E."/>
            <person name="Koornneef M."/>
            <person name="Ausubel F.M."/>
            <person name="Goodman H.M."/>
        </authorList>
    </citation>
    <scope>DISRUPTION PHENOTYPE</scope>
</reference>
<reference key="6">
    <citation type="journal article" date="2014" name="Plant J.">
        <title>GFS9/TT9 contributes to intracellular membrane trafficking and flavonoid accumulation in Arabidopsis thaliana.</title>
        <authorList>
            <person name="Ichino T."/>
            <person name="Fuji K."/>
            <person name="Ueda H."/>
            <person name="Takahashi H."/>
            <person name="Koumoto Y."/>
            <person name="Takagi J."/>
            <person name="Tamura K."/>
            <person name="Sasaki R."/>
            <person name="Aoki K."/>
            <person name="Shimada T."/>
            <person name="Hara-Nishimura I."/>
        </authorList>
    </citation>
    <scope>FUNCTION</scope>
    <scope>SUBCELLULAR LOCATION</scope>
    <scope>DISRUPTION PHENOTYPE</scope>
</reference>
<accession>Q8W4P9</accession>
<accession>C0Z3C5</accession>
<accession>Q9LSJ0</accession>
<comment type="function">
    <text evidence="3">Involved in membrane trafficking and vacuole development through membrane fusion at the vacuole. Required for membrane trafficking machinery and accumulation of flavonoids in the seed coat.</text>
</comment>
<comment type="subcellular location">
    <subcellularLocation>
        <location evidence="3">Golgi apparatus membrane</location>
        <topology evidence="3">Peripheral membrane protein</topology>
    </subcellularLocation>
</comment>
<comment type="disruption phenotype">
    <text evidence="3 4">Abnormal pale brown color of seed coat (testa) due to low flavonoid accumulation levels.</text>
</comment>
<comment type="similarity">
    <text evidence="7">Belongs to the CLEC16A/gop-1 family.</text>
</comment>
<comment type="sequence caution" evidence="7">
    <conflict type="erroneous gene model prediction">
        <sequence resource="EMBL-CDS" id="BAB02860"/>
    </conflict>
</comment>
<organism>
    <name type="scientific">Arabidopsis thaliana</name>
    <name type="common">Mouse-ear cress</name>
    <dbReference type="NCBI Taxonomy" id="3702"/>
    <lineage>
        <taxon>Eukaryota</taxon>
        <taxon>Viridiplantae</taxon>
        <taxon>Streptophyta</taxon>
        <taxon>Embryophyta</taxon>
        <taxon>Tracheophyta</taxon>
        <taxon>Spermatophyta</taxon>
        <taxon>Magnoliopsida</taxon>
        <taxon>eudicotyledons</taxon>
        <taxon>Gunneridae</taxon>
        <taxon>Pentapetalae</taxon>
        <taxon>rosids</taxon>
        <taxon>malvids</taxon>
        <taxon>Brassicales</taxon>
        <taxon>Brassicaceae</taxon>
        <taxon>Camelineae</taxon>
        <taxon>Arabidopsis</taxon>
    </lineage>
</organism>
<name>TT9_ARATH</name>